<dbReference type="EMBL" id="BX293980">
    <property type="protein sequence ID" value="CAE77349.1"/>
    <property type="status" value="ALT_INIT"/>
    <property type="molecule type" value="Genomic_DNA"/>
</dbReference>
<dbReference type="RefSeq" id="NP_975707.3">
    <property type="nucleotide sequence ID" value="NC_005364.2"/>
</dbReference>
<dbReference type="RefSeq" id="WP_013729790.1">
    <property type="nucleotide sequence ID" value="NC_005364.2"/>
</dbReference>
<dbReference type="SMR" id="Q6MSN9"/>
<dbReference type="STRING" id="272632.MSC_0731"/>
<dbReference type="GeneID" id="93426147"/>
<dbReference type="KEGG" id="mmy:MSC_0731"/>
<dbReference type="PATRIC" id="fig|272632.4.peg.788"/>
<dbReference type="eggNOG" id="COG0096">
    <property type="taxonomic scope" value="Bacteria"/>
</dbReference>
<dbReference type="HOGENOM" id="CLU_098428_0_2_14"/>
<dbReference type="Proteomes" id="UP000001016">
    <property type="component" value="Chromosome"/>
</dbReference>
<dbReference type="GO" id="GO:1990904">
    <property type="term" value="C:ribonucleoprotein complex"/>
    <property type="evidence" value="ECO:0007669"/>
    <property type="project" value="UniProtKB-KW"/>
</dbReference>
<dbReference type="GO" id="GO:0005840">
    <property type="term" value="C:ribosome"/>
    <property type="evidence" value="ECO:0007669"/>
    <property type="project" value="UniProtKB-KW"/>
</dbReference>
<dbReference type="GO" id="GO:0019843">
    <property type="term" value="F:rRNA binding"/>
    <property type="evidence" value="ECO:0007669"/>
    <property type="project" value="UniProtKB-UniRule"/>
</dbReference>
<dbReference type="GO" id="GO:0003735">
    <property type="term" value="F:structural constituent of ribosome"/>
    <property type="evidence" value="ECO:0007669"/>
    <property type="project" value="InterPro"/>
</dbReference>
<dbReference type="GO" id="GO:0006412">
    <property type="term" value="P:translation"/>
    <property type="evidence" value="ECO:0007669"/>
    <property type="project" value="UniProtKB-UniRule"/>
</dbReference>
<dbReference type="FunFam" id="3.30.1370.30:FF:000002">
    <property type="entry name" value="30S ribosomal protein S8"/>
    <property type="match status" value="1"/>
</dbReference>
<dbReference type="FunFam" id="3.30.1490.10:FF:000001">
    <property type="entry name" value="30S ribosomal protein S8"/>
    <property type="match status" value="1"/>
</dbReference>
<dbReference type="Gene3D" id="3.30.1370.30">
    <property type="match status" value="1"/>
</dbReference>
<dbReference type="Gene3D" id="3.30.1490.10">
    <property type="match status" value="1"/>
</dbReference>
<dbReference type="HAMAP" id="MF_01302_B">
    <property type="entry name" value="Ribosomal_uS8_B"/>
    <property type="match status" value="1"/>
</dbReference>
<dbReference type="InterPro" id="IPR000630">
    <property type="entry name" value="Ribosomal_uS8"/>
</dbReference>
<dbReference type="InterPro" id="IPR047863">
    <property type="entry name" value="Ribosomal_uS8_CS"/>
</dbReference>
<dbReference type="InterPro" id="IPR035987">
    <property type="entry name" value="Ribosomal_uS8_sf"/>
</dbReference>
<dbReference type="NCBIfam" id="NF001109">
    <property type="entry name" value="PRK00136.1"/>
    <property type="match status" value="1"/>
</dbReference>
<dbReference type="PANTHER" id="PTHR11758">
    <property type="entry name" value="40S RIBOSOMAL PROTEIN S15A"/>
    <property type="match status" value="1"/>
</dbReference>
<dbReference type="Pfam" id="PF00410">
    <property type="entry name" value="Ribosomal_S8"/>
    <property type="match status" value="1"/>
</dbReference>
<dbReference type="SUPFAM" id="SSF56047">
    <property type="entry name" value="Ribosomal protein S8"/>
    <property type="match status" value="1"/>
</dbReference>
<dbReference type="PROSITE" id="PS00053">
    <property type="entry name" value="RIBOSOMAL_S8"/>
    <property type="match status" value="1"/>
</dbReference>
<protein>
    <recommendedName>
        <fullName evidence="1">Small ribosomal subunit protein uS8</fullName>
    </recommendedName>
    <alternativeName>
        <fullName evidence="2">30S ribosomal protein S8</fullName>
    </alternativeName>
</protein>
<gene>
    <name evidence="1" type="primary">rpsH</name>
    <name type="ordered locus">MSC_0731</name>
</gene>
<comment type="function">
    <text evidence="1">One of the primary rRNA binding proteins, it binds directly to 16S rRNA central domain where it helps coordinate assembly of the platform of the 30S subunit.</text>
</comment>
<comment type="subunit">
    <text evidence="1">Part of the 30S ribosomal subunit. Contacts proteins S5 and S12.</text>
</comment>
<comment type="similarity">
    <text evidence="1">Belongs to the universal ribosomal protein uS8 family.</text>
</comment>
<comment type="sequence caution" evidence="2">
    <conflict type="erroneous initiation">
        <sequence resource="EMBL-CDS" id="CAE77349"/>
    </conflict>
</comment>
<reference key="1">
    <citation type="journal article" date="2004" name="Genome Res.">
        <title>The genome sequence of Mycoplasma mycoides subsp. mycoides SC type strain PG1T, the causative agent of contagious bovine pleuropneumonia (CBPP).</title>
        <authorList>
            <person name="Westberg J."/>
            <person name="Persson A."/>
            <person name="Holmberg A."/>
            <person name="Goesmann A."/>
            <person name="Lundeberg J."/>
            <person name="Johansson K.-E."/>
            <person name="Pettersson B."/>
            <person name="Uhlen M."/>
        </authorList>
    </citation>
    <scope>NUCLEOTIDE SEQUENCE [LARGE SCALE GENOMIC DNA]</scope>
    <source>
        <strain>CCUG 32753 / NCTC 10114 / PG1</strain>
    </source>
</reference>
<sequence length="129" mass="14190">MTTDVIADMLTRIRNANQRYLKTVSVPSSKVKLEIARILKEEGFISNFTVEGDVKKTINIELKYQGKTRVIQGLKKISKPGLRVYAQANEIPQVLNGLGISIVSTSQGIMTGKKARLANAGGEVLAFIW</sequence>
<accession>Q6MSN9</accession>
<organism>
    <name type="scientific">Mycoplasma mycoides subsp. mycoides SC (strain CCUG 32753 / NCTC 10114 / PG1)</name>
    <dbReference type="NCBI Taxonomy" id="272632"/>
    <lineage>
        <taxon>Bacteria</taxon>
        <taxon>Bacillati</taxon>
        <taxon>Mycoplasmatota</taxon>
        <taxon>Mollicutes</taxon>
        <taxon>Mycoplasmataceae</taxon>
        <taxon>Mycoplasma</taxon>
    </lineage>
</organism>
<name>RS8_MYCMS</name>
<keyword id="KW-1185">Reference proteome</keyword>
<keyword id="KW-0687">Ribonucleoprotein</keyword>
<keyword id="KW-0689">Ribosomal protein</keyword>
<keyword id="KW-0694">RNA-binding</keyword>
<keyword id="KW-0699">rRNA-binding</keyword>
<evidence type="ECO:0000255" key="1">
    <source>
        <dbReference type="HAMAP-Rule" id="MF_01302"/>
    </source>
</evidence>
<evidence type="ECO:0000305" key="2"/>
<feature type="chain" id="PRO_0000126443" description="Small ribosomal subunit protein uS8">
    <location>
        <begin position="1"/>
        <end position="129"/>
    </location>
</feature>
<proteinExistence type="inferred from homology"/>